<protein>
    <recommendedName>
        <fullName evidence="1">DNA-directed RNA polymerase subunit omega</fullName>
        <shortName evidence="1">RNAP omega subunit</shortName>
        <ecNumber evidence="1">2.7.7.6</ecNumber>
    </recommendedName>
    <alternativeName>
        <fullName evidence="1">RNA polymerase omega subunit</fullName>
    </alternativeName>
    <alternativeName>
        <fullName evidence="1">Transcriptase subunit omega</fullName>
    </alternativeName>
</protein>
<evidence type="ECO:0000255" key="1">
    <source>
        <dbReference type="HAMAP-Rule" id="MF_00366"/>
    </source>
</evidence>
<keyword id="KW-0240">DNA-directed RNA polymerase</keyword>
<keyword id="KW-0548">Nucleotidyltransferase</keyword>
<keyword id="KW-0804">Transcription</keyword>
<keyword id="KW-0808">Transferase</keyword>
<proteinExistence type="inferred from homology"/>
<dbReference type="EC" id="2.7.7.6" evidence="1"/>
<dbReference type="EMBL" id="CP000970">
    <property type="protein sequence ID" value="ACB17612.1"/>
    <property type="molecule type" value="Genomic_DNA"/>
</dbReference>
<dbReference type="RefSeq" id="WP_000135058.1">
    <property type="nucleotide sequence ID" value="NC_010498.1"/>
</dbReference>
<dbReference type="SMR" id="B1LK86"/>
<dbReference type="GeneID" id="98390719"/>
<dbReference type="KEGG" id="ecm:EcSMS35_3984"/>
<dbReference type="HOGENOM" id="CLU_125406_5_3_6"/>
<dbReference type="Proteomes" id="UP000007011">
    <property type="component" value="Chromosome"/>
</dbReference>
<dbReference type="GO" id="GO:0000428">
    <property type="term" value="C:DNA-directed RNA polymerase complex"/>
    <property type="evidence" value="ECO:0007669"/>
    <property type="project" value="UniProtKB-KW"/>
</dbReference>
<dbReference type="GO" id="GO:0003677">
    <property type="term" value="F:DNA binding"/>
    <property type="evidence" value="ECO:0007669"/>
    <property type="project" value="UniProtKB-UniRule"/>
</dbReference>
<dbReference type="GO" id="GO:0003899">
    <property type="term" value="F:DNA-directed RNA polymerase activity"/>
    <property type="evidence" value="ECO:0007669"/>
    <property type="project" value="UniProtKB-UniRule"/>
</dbReference>
<dbReference type="GO" id="GO:0006351">
    <property type="term" value="P:DNA-templated transcription"/>
    <property type="evidence" value="ECO:0007669"/>
    <property type="project" value="UniProtKB-UniRule"/>
</dbReference>
<dbReference type="FunFam" id="3.90.940.10:FF:000001">
    <property type="entry name" value="DNA-directed RNA polymerase subunit omega"/>
    <property type="match status" value="1"/>
</dbReference>
<dbReference type="Gene3D" id="3.90.940.10">
    <property type="match status" value="1"/>
</dbReference>
<dbReference type="HAMAP" id="MF_00366">
    <property type="entry name" value="RNApol_bact_RpoZ"/>
    <property type="match status" value="1"/>
</dbReference>
<dbReference type="InterPro" id="IPR003716">
    <property type="entry name" value="DNA-dir_RNA_pol_omega"/>
</dbReference>
<dbReference type="InterPro" id="IPR006110">
    <property type="entry name" value="Pol_omega/Rpo6/RPB6"/>
</dbReference>
<dbReference type="InterPro" id="IPR036161">
    <property type="entry name" value="RPB6/omega-like_sf"/>
</dbReference>
<dbReference type="NCBIfam" id="TIGR00690">
    <property type="entry name" value="rpoZ"/>
    <property type="match status" value="1"/>
</dbReference>
<dbReference type="PANTHER" id="PTHR34476">
    <property type="entry name" value="DNA-DIRECTED RNA POLYMERASE SUBUNIT OMEGA"/>
    <property type="match status" value="1"/>
</dbReference>
<dbReference type="PANTHER" id="PTHR34476:SF1">
    <property type="entry name" value="DNA-DIRECTED RNA POLYMERASE SUBUNIT OMEGA"/>
    <property type="match status" value="1"/>
</dbReference>
<dbReference type="Pfam" id="PF01192">
    <property type="entry name" value="RNA_pol_Rpb6"/>
    <property type="match status" value="1"/>
</dbReference>
<dbReference type="SMART" id="SM01409">
    <property type="entry name" value="RNA_pol_Rpb6"/>
    <property type="match status" value="1"/>
</dbReference>
<dbReference type="SUPFAM" id="SSF63562">
    <property type="entry name" value="RPB6/omega subunit-like"/>
    <property type="match status" value="1"/>
</dbReference>
<accession>B1LK86</accession>
<organism>
    <name type="scientific">Escherichia coli (strain SMS-3-5 / SECEC)</name>
    <dbReference type="NCBI Taxonomy" id="439855"/>
    <lineage>
        <taxon>Bacteria</taxon>
        <taxon>Pseudomonadati</taxon>
        <taxon>Pseudomonadota</taxon>
        <taxon>Gammaproteobacteria</taxon>
        <taxon>Enterobacterales</taxon>
        <taxon>Enterobacteriaceae</taxon>
        <taxon>Escherichia</taxon>
    </lineage>
</organism>
<name>RPOZ_ECOSM</name>
<reference key="1">
    <citation type="journal article" date="2008" name="J. Bacteriol.">
        <title>Insights into the environmental resistance gene pool from the genome sequence of the multidrug-resistant environmental isolate Escherichia coli SMS-3-5.</title>
        <authorList>
            <person name="Fricke W.F."/>
            <person name="Wright M.S."/>
            <person name="Lindell A.H."/>
            <person name="Harkins D.M."/>
            <person name="Baker-Austin C."/>
            <person name="Ravel J."/>
            <person name="Stepanauskas R."/>
        </authorList>
    </citation>
    <scope>NUCLEOTIDE SEQUENCE [LARGE SCALE GENOMIC DNA]</scope>
    <source>
        <strain>SMS-3-5 / SECEC</strain>
    </source>
</reference>
<comment type="function">
    <text evidence="1">Promotes RNA polymerase assembly. Latches the N- and C-terminal regions of the beta' subunit thereby facilitating its interaction with the beta and alpha subunits.</text>
</comment>
<comment type="catalytic activity">
    <reaction evidence="1">
        <text>RNA(n) + a ribonucleoside 5'-triphosphate = RNA(n+1) + diphosphate</text>
        <dbReference type="Rhea" id="RHEA:21248"/>
        <dbReference type="Rhea" id="RHEA-COMP:14527"/>
        <dbReference type="Rhea" id="RHEA-COMP:17342"/>
        <dbReference type="ChEBI" id="CHEBI:33019"/>
        <dbReference type="ChEBI" id="CHEBI:61557"/>
        <dbReference type="ChEBI" id="CHEBI:140395"/>
        <dbReference type="EC" id="2.7.7.6"/>
    </reaction>
</comment>
<comment type="subunit">
    <text evidence="1">The RNAP catalytic core consists of 2 alpha, 1 beta, 1 beta' and 1 omega subunit. When a sigma factor is associated with the core the holoenzyme is formed, which can initiate transcription.</text>
</comment>
<comment type="similarity">
    <text evidence="1">Belongs to the RNA polymerase subunit omega family.</text>
</comment>
<feature type="chain" id="PRO_1000121222" description="DNA-directed RNA polymerase subunit omega">
    <location>
        <begin position="1"/>
        <end position="91"/>
    </location>
</feature>
<gene>
    <name evidence="1" type="primary">rpoZ</name>
    <name type="ordered locus">EcSMS35_3984</name>
</gene>
<sequence>MARVTVQDAVEKIGNRFDLVLVAARRARQMQVGGKDPLVPEENDKTTVIALREIEEGLINNQILDVRERQEQQEQEAAELQAVTAIAEGRR</sequence>